<organism>
    <name type="scientific">Escherichia coli O127:H6 (strain E2348/69 / EPEC)</name>
    <dbReference type="NCBI Taxonomy" id="574521"/>
    <lineage>
        <taxon>Bacteria</taxon>
        <taxon>Pseudomonadati</taxon>
        <taxon>Pseudomonadota</taxon>
        <taxon>Gammaproteobacteria</taxon>
        <taxon>Enterobacterales</taxon>
        <taxon>Enterobacteriaceae</taxon>
        <taxon>Escherichia</taxon>
    </lineage>
</organism>
<keyword id="KW-0997">Cell inner membrane</keyword>
<keyword id="KW-1003">Cell membrane</keyword>
<keyword id="KW-0472">Membrane</keyword>
<keyword id="KW-1185">Reference proteome</keyword>
<keyword id="KW-0812">Transmembrane</keyword>
<keyword id="KW-1133">Transmembrane helix</keyword>
<comment type="function">
    <text evidence="1">Plays a role in cell envelope biogenesis, maintenance of cell envelope integrity and membrane homeostasis.</text>
</comment>
<comment type="subcellular location">
    <subcellularLocation>
        <location evidence="1">Cell inner membrane</location>
        <topology evidence="1">Multi-pass membrane protein</topology>
    </subcellularLocation>
</comment>
<comment type="similarity">
    <text evidence="1">Belongs to the YciB family.</text>
</comment>
<feature type="chain" id="PRO_1000124253" description="Inner membrane-spanning protein YciB">
    <location>
        <begin position="1"/>
        <end position="179"/>
    </location>
</feature>
<feature type="transmembrane region" description="Helical" evidence="1">
    <location>
        <begin position="22"/>
        <end position="42"/>
    </location>
</feature>
<feature type="transmembrane region" description="Helical" evidence="1">
    <location>
        <begin position="50"/>
        <end position="70"/>
    </location>
</feature>
<feature type="transmembrane region" description="Helical" evidence="1">
    <location>
        <begin position="76"/>
        <end position="96"/>
    </location>
</feature>
<feature type="transmembrane region" description="Helical" evidence="1">
    <location>
        <begin position="121"/>
        <end position="141"/>
    </location>
</feature>
<feature type="transmembrane region" description="Helical" evidence="1">
    <location>
        <begin position="149"/>
        <end position="169"/>
    </location>
</feature>
<reference key="1">
    <citation type="journal article" date="2009" name="J. Bacteriol.">
        <title>Complete genome sequence and comparative genome analysis of enteropathogenic Escherichia coli O127:H6 strain E2348/69.</title>
        <authorList>
            <person name="Iguchi A."/>
            <person name="Thomson N.R."/>
            <person name="Ogura Y."/>
            <person name="Saunders D."/>
            <person name="Ooka T."/>
            <person name="Henderson I.R."/>
            <person name="Harris D."/>
            <person name="Asadulghani M."/>
            <person name="Kurokawa K."/>
            <person name="Dean P."/>
            <person name="Kenny B."/>
            <person name="Quail M.A."/>
            <person name="Thurston S."/>
            <person name="Dougan G."/>
            <person name="Hayashi T."/>
            <person name="Parkhill J."/>
            <person name="Frankel G."/>
        </authorList>
    </citation>
    <scope>NUCLEOTIDE SEQUENCE [LARGE SCALE GENOMIC DNA]</scope>
    <source>
        <strain>E2348/69 / EPEC</strain>
    </source>
</reference>
<sequence length="179" mass="20780">MKQFLDFLPLVVFFAFYKIYDIYAATAALIVATAIVLIYSWVRFRKVEKMALITFVLVVVFGGLTLFFHNDEFIKWKVTVIYALFAGALLVSQWVMKKPLIQRMLGKELTLPQSVWSKLNLAWAVFFILCGLANIYIAFWLPQNIWVNFKVFGLTALTLIFTLLSGIYIYRHMPQEDKS</sequence>
<gene>
    <name evidence="1" type="primary">yciB</name>
    <name type="ordered locus">E2348C_1381</name>
</gene>
<accession>B7UQE5</accession>
<dbReference type="EMBL" id="FM180568">
    <property type="protein sequence ID" value="CAS08929.1"/>
    <property type="molecule type" value="Genomic_DNA"/>
</dbReference>
<dbReference type="RefSeq" id="WP_000808672.1">
    <property type="nucleotide sequence ID" value="NC_011601.1"/>
</dbReference>
<dbReference type="KEGG" id="ecg:E2348C_1381"/>
<dbReference type="HOGENOM" id="CLU_089554_2_0_6"/>
<dbReference type="Proteomes" id="UP000008205">
    <property type="component" value="Chromosome"/>
</dbReference>
<dbReference type="GO" id="GO:0005886">
    <property type="term" value="C:plasma membrane"/>
    <property type="evidence" value="ECO:0007669"/>
    <property type="project" value="UniProtKB-SubCell"/>
</dbReference>
<dbReference type="HAMAP" id="MF_00189">
    <property type="entry name" value="YciB"/>
    <property type="match status" value="1"/>
</dbReference>
<dbReference type="InterPro" id="IPR006008">
    <property type="entry name" value="YciB"/>
</dbReference>
<dbReference type="NCBIfam" id="TIGR00997">
    <property type="entry name" value="ispZ"/>
    <property type="match status" value="1"/>
</dbReference>
<dbReference type="NCBIfam" id="NF001324">
    <property type="entry name" value="PRK00259.1-2"/>
    <property type="match status" value="1"/>
</dbReference>
<dbReference type="NCBIfam" id="NF001325">
    <property type="entry name" value="PRK00259.1-3"/>
    <property type="match status" value="1"/>
</dbReference>
<dbReference type="NCBIfam" id="NF001326">
    <property type="entry name" value="PRK00259.1-4"/>
    <property type="match status" value="1"/>
</dbReference>
<dbReference type="PANTHER" id="PTHR36917:SF1">
    <property type="entry name" value="INNER MEMBRANE-SPANNING PROTEIN YCIB"/>
    <property type="match status" value="1"/>
</dbReference>
<dbReference type="PANTHER" id="PTHR36917">
    <property type="entry name" value="INTRACELLULAR SEPTATION PROTEIN A-RELATED"/>
    <property type="match status" value="1"/>
</dbReference>
<dbReference type="Pfam" id="PF04279">
    <property type="entry name" value="IspA"/>
    <property type="match status" value="1"/>
</dbReference>
<proteinExistence type="inferred from homology"/>
<protein>
    <recommendedName>
        <fullName evidence="1">Inner membrane-spanning protein YciB</fullName>
    </recommendedName>
</protein>
<name>YCIB_ECO27</name>
<evidence type="ECO:0000255" key="1">
    <source>
        <dbReference type="HAMAP-Rule" id="MF_00189"/>
    </source>
</evidence>